<organism>
    <name type="scientific">Paracidovorax citrulli (strain AAC00-1)</name>
    <name type="common">Acidovorax citrulli</name>
    <dbReference type="NCBI Taxonomy" id="397945"/>
    <lineage>
        <taxon>Bacteria</taxon>
        <taxon>Pseudomonadati</taxon>
        <taxon>Pseudomonadota</taxon>
        <taxon>Betaproteobacteria</taxon>
        <taxon>Burkholderiales</taxon>
        <taxon>Comamonadaceae</taxon>
        <taxon>Paracidovorax</taxon>
    </lineage>
</organism>
<name>GPMA_PARC0</name>
<evidence type="ECO:0000255" key="1">
    <source>
        <dbReference type="HAMAP-Rule" id="MF_01039"/>
    </source>
</evidence>
<dbReference type="EC" id="5.4.2.11" evidence="1"/>
<dbReference type="EMBL" id="CP000512">
    <property type="protein sequence ID" value="ABM34403.1"/>
    <property type="molecule type" value="Genomic_DNA"/>
</dbReference>
<dbReference type="RefSeq" id="WP_011796890.1">
    <property type="nucleotide sequence ID" value="NC_008752.1"/>
</dbReference>
<dbReference type="SMR" id="A1TTW5"/>
<dbReference type="STRING" id="397945.Aave_3858"/>
<dbReference type="GeneID" id="79788866"/>
<dbReference type="KEGG" id="aav:Aave_3858"/>
<dbReference type="eggNOG" id="COG0588">
    <property type="taxonomic scope" value="Bacteria"/>
</dbReference>
<dbReference type="HOGENOM" id="CLU_033323_1_1_4"/>
<dbReference type="OrthoDB" id="9781415at2"/>
<dbReference type="UniPathway" id="UPA00109">
    <property type="reaction ID" value="UER00186"/>
</dbReference>
<dbReference type="Proteomes" id="UP000002596">
    <property type="component" value="Chromosome"/>
</dbReference>
<dbReference type="GO" id="GO:0004619">
    <property type="term" value="F:phosphoglycerate mutase activity"/>
    <property type="evidence" value="ECO:0007669"/>
    <property type="project" value="UniProtKB-EC"/>
</dbReference>
<dbReference type="GO" id="GO:0006094">
    <property type="term" value="P:gluconeogenesis"/>
    <property type="evidence" value="ECO:0007669"/>
    <property type="project" value="UniProtKB-UniRule"/>
</dbReference>
<dbReference type="GO" id="GO:0006096">
    <property type="term" value="P:glycolytic process"/>
    <property type="evidence" value="ECO:0007669"/>
    <property type="project" value="UniProtKB-UniRule"/>
</dbReference>
<dbReference type="CDD" id="cd07067">
    <property type="entry name" value="HP_PGM_like"/>
    <property type="match status" value="1"/>
</dbReference>
<dbReference type="FunFam" id="3.40.50.1240:FF:000003">
    <property type="entry name" value="2,3-bisphosphoglycerate-dependent phosphoglycerate mutase"/>
    <property type="match status" value="1"/>
</dbReference>
<dbReference type="Gene3D" id="3.40.50.1240">
    <property type="entry name" value="Phosphoglycerate mutase-like"/>
    <property type="match status" value="1"/>
</dbReference>
<dbReference type="HAMAP" id="MF_01039">
    <property type="entry name" value="PGAM_GpmA"/>
    <property type="match status" value="1"/>
</dbReference>
<dbReference type="InterPro" id="IPR013078">
    <property type="entry name" value="His_Pase_superF_clade-1"/>
</dbReference>
<dbReference type="InterPro" id="IPR029033">
    <property type="entry name" value="His_PPase_superfam"/>
</dbReference>
<dbReference type="InterPro" id="IPR001345">
    <property type="entry name" value="PG/BPGM_mutase_AS"/>
</dbReference>
<dbReference type="InterPro" id="IPR005952">
    <property type="entry name" value="Phosphogly_mut1"/>
</dbReference>
<dbReference type="NCBIfam" id="TIGR01258">
    <property type="entry name" value="pgm_1"/>
    <property type="match status" value="1"/>
</dbReference>
<dbReference type="NCBIfam" id="NF010713">
    <property type="entry name" value="PRK14115.1"/>
    <property type="match status" value="1"/>
</dbReference>
<dbReference type="PANTHER" id="PTHR11931">
    <property type="entry name" value="PHOSPHOGLYCERATE MUTASE"/>
    <property type="match status" value="1"/>
</dbReference>
<dbReference type="Pfam" id="PF00300">
    <property type="entry name" value="His_Phos_1"/>
    <property type="match status" value="1"/>
</dbReference>
<dbReference type="PIRSF" id="PIRSF000709">
    <property type="entry name" value="6PFK_2-Ptase"/>
    <property type="match status" value="1"/>
</dbReference>
<dbReference type="SMART" id="SM00855">
    <property type="entry name" value="PGAM"/>
    <property type="match status" value="1"/>
</dbReference>
<dbReference type="SUPFAM" id="SSF53254">
    <property type="entry name" value="Phosphoglycerate mutase-like"/>
    <property type="match status" value="1"/>
</dbReference>
<dbReference type="PROSITE" id="PS00175">
    <property type="entry name" value="PG_MUTASE"/>
    <property type="match status" value="1"/>
</dbReference>
<feature type="chain" id="PRO_1000064023" description="2,3-bisphosphoglycerate-dependent phosphoglycerate mutase">
    <location>
        <begin position="1"/>
        <end position="247"/>
    </location>
</feature>
<feature type="active site" description="Tele-phosphohistidine intermediate" evidence="1">
    <location>
        <position position="9"/>
    </location>
</feature>
<feature type="active site" description="Proton donor/acceptor" evidence="1">
    <location>
        <position position="87"/>
    </location>
</feature>
<feature type="binding site" evidence="1">
    <location>
        <begin position="8"/>
        <end position="15"/>
    </location>
    <ligand>
        <name>substrate</name>
    </ligand>
</feature>
<feature type="binding site" evidence="1">
    <location>
        <begin position="21"/>
        <end position="22"/>
    </location>
    <ligand>
        <name>substrate</name>
    </ligand>
</feature>
<feature type="binding site" evidence="1">
    <location>
        <position position="60"/>
    </location>
    <ligand>
        <name>substrate</name>
    </ligand>
</feature>
<feature type="binding site" evidence="1">
    <location>
        <begin position="87"/>
        <end position="90"/>
    </location>
    <ligand>
        <name>substrate</name>
    </ligand>
</feature>
<feature type="binding site" evidence="1">
    <location>
        <position position="98"/>
    </location>
    <ligand>
        <name>substrate</name>
    </ligand>
</feature>
<feature type="binding site" evidence="1">
    <location>
        <begin position="114"/>
        <end position="115"/>
    </location>
    <ligand>
        <name>substrate</name>
    </ligand>
</feature>
<feature type="binding site" evidence="1">
    <location>
        <begin position="183"/>
        <end position="184"/>
    </location>
    <ligand>
        <name>substrate</name>
    </ligand>
</feature>
<feature type="site" description="Transition state stabilizer" evidence="1">
    <location>
        <position position="182"/>
    </location>
</feature>
<sequence length="247" mass="27688">MHKLVLIRHGESTWNLENRFTGWTDVDLTPTGIEQAKTAGRLLKAEGYEFDLAFTSVLKRATRTLWHVLDEMDRTWLPVEHSWRLNERHYGALQGLNKADMAKQYGDAQVLVWRRSYDTPPPALEAGDPRSERGDIRYAGLDPEQIPLTECLKDTVARVLPFWNERIAPAMRSGQRVMVAAHGNSIRALVKYLDGISDDDIVGLNIPNGIPLVYELDDDLKPLRHYYLGDAEAAAKAAAAVASQGKA</sequence>
<keyword id="KW-0312">Gluconeogenesis</keyword>
<keyword id="KW-0324">Glycolysis</keyword>
<keyword id="KW-0413">Isomerase</keyword>
<accession>A1TTW5</accession>
<reference key="1">
    <citation type="submission" date="2006-12" db="EMBL/GenBank/DDBJ databases">
        <title>Complete sequence of Acidovorax avenae subsp. citrulli AAC00-1.</title>
        <authorList>
            <person name="Copeland A."/>
            <person name="Lucas S."/>
            <person name="Lapidus A."/>
            <person name="Barry K."/>
            <person name="Detter J.C."/>
            <person name="Glavina del Rio T."/>
            <person name="Dalin E."/>
            <person name="Tice H."/>
            <person name="Pitluck S."/>
            <person name="Kiss H."/>
            <person name="Brettin T."/>
            <person name="Bruce D."/>
            <person name="Han C."/>
            <person name="Tapia R."/>
            <person name="Gilna P."/>
            <person name="Schmutz J."/>
            <person name="Larimer F."/>
            <person name="Land M."/>
            <person name="Hauser L."/>
            <person name="Kyrpides N."/>
            <person name="Kim E."/>
            <person name="Stahl D."/>
            <person name="Richardson P."/>
        </authorList>
    </citation>
    <scope>NUCLEOTIDE SEQUENCE [LARGE SCALE GENOMIC DNA]</scope>
    <source>
        <strain>AAC00-1</strain>
    </source>
</reference>
<comment type="function">
    <text evidence="1">Catalyzes the interconversion of 2-phosphoglycerate and 3-phosphoglycerate.</text>
</comment>
<comment type="catalytic activity">
    <reaction evidence="1">
        <text>(2R)-2-phosphoglycerate = (2R)-3-phosphoglycerate</text>
        <dbReference type="Rhea" id="RHEA:15901"/>
        <dbReference type="ChEBI" id="CHEBI:58272"/>
        <dbReference type="ChEBI" id="CHEBI:58289"/>
        <dbReference type="EC" id="5.4.2.11"/>
    </reaction>
</comment>
<comment type="pathway">
    <text evidence="1">Carbohydrate degradation; glycolysis; pyruvate from D-glyceraldehyde 3-phosphate: step 3/5.</text>
</comment>
<comment type="subunit">
    <text evidence="1">Homodimer.</text>
</comment>
<comment type="similarity">
    <text evidence="1">Belongs to the phosphoglycerate mutase family. BPG-dependent PGAM subfamily.</text>
</comment>
<gene>
    <name evidence="1" type="primary">gpmA</name>
    <name type="ordered locus">Aave_3858</name>
</gene>
<proteinExistence type="inferred from homology"/>
<protein>
    <recommendedName>
        <fullName evidence="1">2,3-bisphosphoglycerate-dependent phosphoglycerate mutase</fullName>
        <shortName evidence="1">BPG-dependent PGAM</shortName>
        <shortName evidence="1">PGAM</shortName>
        <shortName evidence="1">Phosphoglyceromutase</shortName>
        <shortName evidence="1">dPGM</shortName>
        <ecNumber evidence="1">5.4.2.11</ecNumber>
    </recommendedName>
</protein>